<name>HIS7_JANSC</name>
<feature type="chain" id="PRO_1000010284" description="Imidazoleglycerol-phosphate dehydratase">
    <location>
        <begin position="1"/>
        <end position="195"/>
    </location>
</feature>
<dbReference type="EC" id="4.2.1.19" evidence="1"/>
<dbReference type="EMBL" id="CP000264">
    <property type="protein sequence ID" value="ABD55705.1"/>
    <property type="molecule type" value="Genomic_DNA"/>
</dbReference>
<dbReference type="RefSeq" id="WP_011455909.1">
    <property type="nucleotide sequence ID" value="NC_007802.1"/>
</dbReference>
<dbReference type="SMR" id="Q28NK7"/>
<dbReference type="STRING" id="290400.Jann_2788"/>
<dbReference type="KEGG" id="jan:Jann_2788"/>
<dbReference type="eggNOG" id="COG0131">
    <property type="taxonomic scope" value="Bacteria"/>
</dbReference>
<dbReference type="HOGENOM" id="CLU_044308_2_0_5"/>
<dbReference type="OrthoDB" id="9813612at2"/>
<dbReference type="UniPathway" id="UPA00031">
    <property type="reaction ID" value="UER00011"/>
</dbReference>
<dbReference type="Proteomes" id="UP000008326">
    <property type="component" value="Chromosome"/>
</dbReference>
<dbReference type="GO" id="GO:0005737">
    <property type="term" value="C:cytoplasm"/>
    <property type="evidence" value="ECO:0007669"/>
    <property type="project" value="UniProtKB-SubCell"/>
</dbReference>
<dbReference type="GO" id="GO:0004424">
    <property type="term" value="F:imidazoleglycerol-phosphate dehydratase activity"/>
    <property type="evidence" value="ECO:0007669"/>
    <property type="project" value="UniProtKB-UniRule"/>
</dbReference>
<dbReference type="GO" id="GO:0000105">
    <property type="term" value="P:L-histidine biosynthetic process"/>
    <property type="evidence" value="ECO:0007669"/>
    <property type="project" value="UniProtKB-UniRule"/>
</dbReference>
<dbReference type="CDD" id="cd07914">
    <property type="entry name" value="IGPD"/>
    <property type="match status" value="1"/>
</dbReference>
<dbReference type="FunFam" id="3.30.230.40:FF:000001">
    <property type="entry name" value="Imidazoleglycerol-phosphate dehydratase HisB"/>
    <property type="match status" value="1"/>
</dbReference>
<dbReference type="FunFam" id="3.30.230.40:FF:000003">
    <property type="entry name" value="Imidazoleglycerol-phosphate dehydratase HisB"/>
    <property type="match status" value="1"/>
</dbReference>
<dbReference type="Gene3D" id="3.30.230.40">
    <property type="entry name" value="Imidazole glycerol phosphate dehydratase, domain 1"/>
    <property type="match status" value="2"/>
</dbReference>
<dbReference type="HAMAP" id="MF_00076">
    <property type="entry name" value="HisB"/>
    <property type="match status" value="1"/>
</dbReference>
<dbReference type="InterPro" id="IPR038494">
    <property type="entry name" value="IGPD_sf"/>
</dbReference>
<dbReference type="InterPro" id="IPR000807">
    <property type="entry name" value="ImidazoleglycerolP_deHydtase"/>
</dbReference>
<dbReference type="InterPro" id="IPR020565">
    <property type="entry name" value="ImidazoleglycerP_deHydtase_CS"/>
</dbReference>
<dbReference type="InterPro" id="IPR020568">
    <property type="entry name" value="Ribosomal_Su5_D2-typ_SF"/>
</dbReference>
<dbReference type="NCBIfam" id="NF002109">
    <property type="entry name" value="PRK00951.1-5"/>
    <property type="match status" value="1"/>
</dbReference>
<dbReference type="NCBIfam" id="NF002111">
    <property type="entry name" value="PRK00951.2-1"/>
    <property type="match status" value="1"/>
</dbReference>
<dbReference type="NCBIfam" id="NF002114">
    <property type="entry name" value="PRK00951.2-4"/>
    <property type="match status" value="1"/>
</dbReference>
<dbReference type="PANTHER" id="PTHR23133:SF2">
    <property type="entry name" value="IMIDAZOLEGLYCEROL-PHOSPHATE DEHYDRATASE"/>
    <property type="match status" value="1"/>
</dbReference>
<dbReference type="PANTHER" id="PTHR23133">
    <property type="entry name" value="IMIDAZOLEGLYCEROL-PHOSPHATE DEHYDRATASE HIS7"/>
    <property type="match status" value="1"/>
</dbReference>
<dbReference type="Pfam" id="PF00475">
    <property type="entry name" value="IGPD"/>
    <property type="match status" value="1"/>
</dbReference>
<dbReference type="SUPFAM" id="SSF54211">
    <property type="entry name" value="Ribosomal protein S5 domain 2-like"/>
    <property type="match status" value="2"/>
</dbReference>
<dbReference type="PROSITE" id="PS00954">
    <property type="entry name" value="IGP_DEHYDRATASE_1"/>
    <property type="match status" value="1"/>
</dbReference>
<dbReference type="PROSITE" id="PS00955">
    <property type="entry name" value="IGP_DEHYDRATASE_2"/>
    <property type="match status" value="1"/>
</dbReference>
<sequence>MRTAQITRKTAETDISVEINLDGTGTYDNLTGVGFFDHMLDQLARHALMDMTVRCAGDLHIDDHHSVEDVGIALGQALTQAMGDKRGIRRYGECVLPMDDARVACALDLSGRPFLVWDVEMPTAKIGTFDTELVREFFQAFATHGGITLHLTQAAGVNSHHIAEAAFKATARALRDALEVDPRTADAIPSTKGSL</sequence>
<comment type="catalytic activity">
    <reaction evidence="1">
        <text>D-erythro-1-(imidazol-4-yl)glycerol 3-phosphate = 3-(imidazol-4-yl)-2-oxopropyl phosphate + H2O</text>
        <dbReference type="Rhea" id="RHEA:11040"/>
        <dbReference type="ChEBI" id="CHEBI:15377"/>
        <dbReference type="ChEBI" id="CHEBI:57766"/>
        <dbReference type="ChEBI" id="CHEBI:58278"/>
        <dbReference type="EC" id="4.2.1.19"/>
    </reaction>
</comment>
<comment type="pathway">
    <text evidence="1">Amino-acid biosynthesis; L-histidine biosynthesis; L-histidine from 5-phospho-alpha-D-ribose 1-diphosphate: step 6/9.</text>
</comment>
<comment type="subcellular location">
    <subcellularLocation>
        <location evidence="1">Cytoplasm</location>
    </subcellularLocation>
</comment>
<comment type="similarity">
    <text evidence="1">Belongs to the imidazoleglycerol-phosphate dehydratase family.</text>
</comment>
<proteinExistence type="inferred from homology"/>
<reference key="1">
    <citation type="submission" date="2006-02" db="EMBL/GenBank/DDBJ databases">
        <title>Complete sequence of chromosome of Jannaschia sp. CCS1.</title>
        <authorList>
            <consortium name="US DOE Joint Genome Institute"/>
            <person name="Copeland A."/>
            <person name="Lucas S."/>
            <person name="Lapidus A."/>
            <person name="Barry K."/>
            <person name="Detter J.C."/>
            <person name="Glavina del Rio T."/>
            <person name="Hammon N."/>
            <person name="Israni S."/>
            <person name="Pitluck S."/>
            <person name="Brettin T."/>
            <person name="Bruce D."/>
            <person name="Han C."/>
            <person name="Tapia R."/>
            <person name="Gilna P."/>
            <person name="Chertkov O."/>
            <person name="Saunders E."/>
            <person name="Schmutz J."/>
            <person name="Larimer F."/>
            <person name="Land M."/>
            <person name="Kyrpides N."/>
            <person name="Lykidis A."/>
            <person name="Moran M.A."/>
            <person name="Belas R."/>
            <person name="Ye W."/>
            <person name="Buchan A."/>
            <person name="Gonzalez J.M."/>
            <person name="Schell M.A."/>
            <person name="Richardson P."/>
        </authorList>
    </citation>
    <scope>NUCLEOTIDE SEQUENCE [LARGE SCALE GENOMIC DNA]</scope>
    <source>
        <strain>CCS1</strain>
    </source>
</reference>
<protein>
    <recommendedName>
        <fullName evidence="1">Imidazoleglycerol-phosphate dehydratase</fullName>
        <shortName evidence="1">IGPD</shortName>
        <ecNumber evidence="1">4.2.1.19</ecNumber>
    </recommendedName>
</protein>
<keyword id="KW-0028">Amino-acid biosynthesis</keyword>
<keyword id="KW-0963">Cytoplasm</keyword>
<keyword id="KW-0368">Histidine biosynthesis</keyword>
<keyword id="KW-0456">Lyase</keyword>
<keyword id="KW-1185">Reference proteome</keyword>
<evidence type="ECO:0000255" key="1">
    <source>
        <dbReference type="HAMAP-Rule" id="MF_00076"/>
    </source>
</evidence>
<accession>Q28NK7</accession>
<organism>
    <name type="scientific">Jannaschia sp. (strain CCS1)</name>
    <dbReference type="NCBI Taxonomy" id="290400"/>
    <lineage>
        <taxon>Bacteria</taxon>
        <taxon>Pseudomonadati</taxon>
        <taxon>Pseudomonadota</taxon>
        <taxon>Alphaproteobacteria</taxon>
        <taxon>Rhodobacterales</taxon>
        <taxon>Roseobacteraceae</taxon>
        <taxon>Jannaschia</taxon>
    </lineage>
</organism>
<gene>
    <name evidence="1" type="primary">hisB</name>
    <name type="ordered locus">Jann_2788</name>
</gene>